<name>MIAA1_AZOPC</name>
<comment type="function">
    <text evidence="1">Catalyzes the transfer of a dimethylallyl group onto the adenine at position 37 in tRNAs that read codons beginning with uridine, leading to the formation of N6-(dimethylallyl)adenosine (i(6)A).</text>
</comment>
<comment type="catalytic activity">
    <reaction evidence="1">
        <text>adenosine(37) in tRNA + dimethylallyl diphosphate = N(6)-dimethylallyladenosine(37) in tRNA + diphosphate</text>
        <dbReference type="Rhea" id="RHEA:26482"/>
        <dbReference type="Rhea" id="RHEA-COMP:10162"/>
        <dbReference type="Rhea" id="RHEA-COMP:10375"/>
        <dbReference type="ChEBI" id="CHEBI:33019"/>
        <dbReference type="ChEBI" id="CHEBI:57623"/>
        <dbReference type="ChEBI" id="CHEBI:74411"/>
        <dbReference type="ChEBI" id="CHEBI:74415"/>
        <dbReference type="EC" id="2.5.1.75"/>
    </reaction>
</comment>
<comment type="cofactor">
    <cofactor evidence="1">
        <name>Mg(2+)</name>
        <dbReference type="ChEBI" id="CHEBI:18420"/>
    </cofactor>
</comment>
<comment type="subunit">
    <text evidence="1">Monomer.</text>
</comment>
<comment type="similarity">
    <text evidence="1">Belongs to the IPP transferase family.</text>
</comment>
<organism>
    <name type="scientific">Azobacteroides pseudotrichonymphae genomovar. CFP2</name>
    <dbReference type="NCBI Taxonomy" id="511995"/>
    <lineage>
        <taxon>Bacteria</taxon>
        <taxon>Pseudomonadati</taxon>
        <taxon>Bacteroidota</taxon>
        <taxon>Bacteroidia</taxon>
        <taxon>Bacteroidales</taxon>
        <taxon>Candidatus Azobacteroides</taxon>
    </lineage>
</organism>
<evidence type="ECO:0000255" key="1">
    <source>
        <dbReference type="HAMAP-Rule" id="MF_00185"/>
    </source>
</evidence>
<dbReference type="EC" id="2.5.1.75" evidence="1"/>
<dbReference type="EMBL" id="AP010656">
    <property type="protein sequence ID" value="BAG83560.1"/>
    <property type="molecule type" value="Genomic_DNA"/>
</dbReference>
<dbReference type="SMR" id="B6YQT8"/>
<dbReference type="STRING" id="511995.CFPG_297"/>
<dbReference type="KEGG" id="aps:CFPG_297"/>
<dbReference type="eggNOG" id="COG0324">
    <property type="taxonomic scope" value="Bacteria"/>
</dbReference>
<dbReference type="HOGENOM" id="CLU_032616_0_1_10"/>
<dbReference type="Proteomes" id="UP000000723">
    <property type="component" value="Chromosome"/>
</dbReference>
<dbReference type="GO" id="GO:0005524">
    <property type="term" value="F:ATP binding"/>
    <property type="evidence" value="ECO:0007669"/>
    <property type="project" value="UniProtKB-UniRule"/>
</dbReference>
<dbReference type="GO" id="GO:0052381">
    <property type="term" value="F:tRNA dimethylallyltransferase activity"/>
    <property type="evidence" value="ECO:0007669"/>
    <property type="project" value="UniProtKB-UniRule"/>
</dbReference>
<dbReference type="GO" id="GO:0006400">
    <property type="term" value="P:tRNA modification"/>
    <property type="evidence" value="ECO:0007669"/>
    <property type="project" value="TreeGrafter"/>
</dbReference>
<dbReference type="Gene3D" id="1.10.287.890">
    <property type="entry name" value="Crystal structure of tRNA isopentenylpyrophosphate transferase (bh2366) domain"/>
    <property type="match status" value="1"/>
</dbReference>
<dbReference type="Gene3D" id="3.40.50.300">
    <property type="entry name" value="P-loop containing nucleotide triphosphate hydrolases"/>
    <property type="match status" value="2"/>
</dbReference>
<dbReference type="HAMAP" id="MF_00185">
    <property type="entry name" value="IPP_trans"/>
    <property type="match status" value="1"/>
</dbReference>
<dbReference type="InterPro" id="IPR039657">
    <property type="entry name" value="Dimethylallyltransferase"/>
</dbReference>
<dbReference type="InterPro" id="IPR018022">
    <property type="entry name" value="IPT"/>
</dbReference>
<dbReference type="InterPro" id="IPR027417">
    <property type="entry name" value="P-loop_NTPase"/>
</dbReference>
<dbReference type="NCBIfam" id="TIGR00174">
    <property type="entry name" value="miaA"/>
    <property type="match status" value="1"/>
</dbReference>
<dbReference type="PANTHER" id="PTHR11088">
    <property type="entry name" value="TRNA DIMETHYLALLYLTRANSFERASE"/>
    <property type="match status" value="1"/>
</dbReference>
<dbReference type="PANTHER" id="PTHR11088:SF60">
    <property type="entry name" value="TRNA DIMETHYLALLYLTRANSFERASE"/>
    <property type="match status" value="1"/>
</dbReference>
<dbReference type="Pfam" id="PF01715">
    <property type="entry name" value="IPPT"/>
    <property type="match status" value="1"/>
</dbReference>
<dbReference type="SUPFAM" id="SSF52540">
    <property type="entry name" value="P-loop containing nucleoside triphosphate hydrolases"/>
    <property type="match status" value="1"/>
</dbReference>
<reference key="1">
    <citation type="journal article" date="2008" name="Science">
        <title>Genome of an endosymbiont coupling N2 fixation to cellulolysis within RT protist cells in termite gut.</title>
        <authorList>
            <person name="Hongoh Y."/>
            <person name="Sharma V.K."/>
            <person name="Prakash T."/>
            <person name="Noda S."/>
            <person name="Toh H."/>
            <person name="Taylor T.D."/>
            <person name="Kudo T."/>
            <person name="Sakaki Y."/>
            <person name="Toyoda A."/>
            <person name="Hattori M."/>
            <person name="Ohkuma M."/>
        </authorList>
    </citation>
    <scope>NUCLEOTIDE SEQUENCE [LARGE SCALE GENOMIC DNA]</scope>
</reference>
<sequence length="306" mass="35962">MELQEYELITVLGPTASGKTAFATRLANELNSEIISADSRQVYRNMTIGTGKDLDNYIIEGKFIPYHLIDICQAGEKYNVFRFQHDFHEIFTKIKKKGKLPILCGGTGLYIESVLKGYKLLDVPENLILRSNLKDKSVDELKKILKSYKNLHNQTDTDSVRKIIRAIEIETCYPTQKNNPINSYSSIKSLIIGVNIDRELRRNRISLRLKKRLEEGMIEEVKNLLETELSPDQLIYYGLEYKYITLYLIGQLSYSEMYQQLEIAIHQYAKRQMTWFRGMERRGFKIHWIDVYEMNHLNEIFNRIHF</sequence>
<protein>
    <recommendedName>
        <fullName evidence="1">tRNA dimethylallyltransferase 1</fullName>
        <ecNumber evidence="1">2.5.1.75</ecNumber>
    </recommendedName>
    <alternativeName>
        <fullName evidence="1">Dimethylallyl diphosphate:tRNA dimethylallyltransferase 1</fullName>
        <shortName evidence="1">DMAPP:tRNA dimethylallyltransferase 1</shortName>
        <shortName evidence="1">DMATase 1</shortName>
    </alternativeName>
    <alternativeName>
        <fullName evidence="1">Isopentenyl-diphosphate:tRNA isopentenyltransferase 1</fullName>
        <shortName evidence="1">IPP transferase 1</shortName>
        <shortName evidence="1">IPPT 1</shortName>
        <shortName evidence="1">IPTase 1</shortName>
    </alternativeName>
</protein>
<proteinExistence type="inferred from homology"/>
<gene>
    <name evidence="1" type="primary">miaA1</name>
    <name type="ordered locus">CFPG_297</name>
</gene>
<accession>B6YQT8</accession>
<keyword id="KW-0067">ATP-binding</keyword>
<keyword id="KW-0460">Magnesium</keyword>
<keyword id="KW-0547">Nucleotide-binding</keyword>
<keyword id="KW-1185">Reference proteome</keyword>
<keyword id="KW-0808">Transferase</keyword>
<keyword id="KW-0819">tRNA processing</keyword>
<feature type="chain" id="PRO_0000377072" description="tRNA dimethylallyltransferase 1">
    <location>
        <begin position="1"/>
        <end position="306"/>
    </location>
</feature>
<feature type="region of interest" description="Interaction with substrate tRNA" evidence="1">
    <location>
        <begin position="38"/>
        <end position="41"/>
    </location>
</feature>
<feature type="binding site" evidence="1">
    <location>
        <begin position="13"/>
        <end position="20"/>
    </location>
    <ligand>
        <name>ATP</name>
        <dbReference type="ChEBI" id="CHEBI:30616"/>
    </ligand>
</feature>
<feature type="binding site" evidence="1">
    <location>
        <begin position="15"/>
        <end position="20"/>
    </location>
    <ligand>
        <name>substrate</name>
    </ligand>
</feature>
<feature type="site" description="Interaction with substrate tRNA" evidence="1">
    <location>
        <position position="107"/>
    </location>
</feature>